<dbReference type="EC" id="6.3.5.-" evidence="1"/>
<dbReference type="EMBL" id="CP000514">
    <property type="protein sequence ID" value="ABM19806.1"/>
    <property type="molecule type" value="Genomic_DNA"/>
</dbReference>
<dbReference type="RefSeq" id="WP_011786176.1">
    <property type="nucleotide sequence ID" value="NC_008740.1"/>
</dbReference>
<dbReference type="SMR" id="A1U487"/>
<dbReference type="STRING" id="351348.Maqu_2731"/>
<dbReference type="KEGG" id="maq:Maqu_2731"/>
<dbReference type="eggNOG" id="COG0064">
    <property type="taxonomic scope" value="Bacteria"/>
</dbReference>
<dbReference type="HOGENOM" id="CLU_019240_0_0_6"/>
<dbReference type="OrthoDB" id="9804078at2"/>
<dbReference type="Proteomes" id="UP000000998">
    <property type="component" value="Chromosome"/>
</dbReference>
<dbReference type="GO" id="GO:0050566">
    <property type="term" value="F:asparaginyl-tRNA synthase (glutamine-hydrolyzing) activity"/>
    <property type="evidence" value="ECO:0007669"/>
    <property type="project" value="RHEA"/>
</dbReference>
<dbReference type="GO" id="GO:0005524">
    <property type="term" value="F:ATP binding"/>
    <property type="evidence" value="ECO:0007669"/>
    <property type="project" value="UniProtKB-KW"/>
</dbReference>
<dbReference type="GO" id="GO:0050567">
    <property type="term" value="F:glutaminyl-tRNA synthase (glutamine-hydrolyzing) activity"/>
    <property type="evidence" value="ECO:0007669"/>
    <property type="project" value="UniProtKB-UniRule"/>
</dbReference>
<dbReference type="GO" id="GO:0070681">
    <property type="term" value="P:glutaminyl-tRNAGln biosynthesis via transamidation"/>
    <property type="evidence" value="ECO:0007669"/>
    <property type="project" value="TreeGrafter"/>
</dbReference>
<dbReference type="GO" id="GO:0006412">
    <property type="term" value="P:translation"/>
    <property type="evidence" value="ECO:0007669"/>
    <property type="project" value="UniProtKB-UniRule"/>
</dbReference>
<dbReference type="FunFam" id="1.10.10.410:FF:000001">
    <property type="entry name" value="Aspartyl/glutamyl-tRNA(Asn/Gln) amidotransferase subunit B"/>
    <property type="match status" value="1"/>
</dbReference>
<dbReference type="FunFam" id="1.10.150.380:FF:000001">
    <property type="entry name" value="Aspartyl/glutamyl-tRNA(Asn/Gln) amidotransferase subunit B"/>
    <property type="match status" value="1"/>
</dbReference>
<dbReference type="Gene3D" id="1.10.10.410">
    <property type="match status" value="1"/>
</dbReference>
<dbReference type="Gene3D" id="1.10.150.380">
    <property type="entry name" value="GatB domain, N-terminal subdomain"/>
    <property type="match status" value="1"/>
</dbReference>
<dbReference type="HAMAP" id="MF_00121">
    <property type="entry name" value="GatB"/>
    <property type="match status" value="1"/>
</dbReference>
<dbReference type="InterPro" id="IPR017959">
    <property type="entry name" value="Asn/Gln-tRNA_amidoTrfase_suB/E"/>
</dbReference>
<dbReference type="InterPro" id="IPR006075">
    <property type="entry name" value="Asn/Gln-tRNA_Trfase_suB/E_cat"/>
</dbReference>
<dbReference type="InterPro" id="IPR018027">
    <property type="entry name" value="Asn/Gln_amidotransferase"/>
</dbReference>
<dbReference type="InterPro" id="IPR003789">
    <property type="entry name" value="Asn/Gln_tRNA_amidoTrase-B-like"/>
</dbReference>
<dbReference type="InterPro" id="IPR004413">
    <property type="entry name" value="GatB"/>
</dbReference>
<dbReference type="InterPro" id="IPR042114">
    <property type="entry name" value="GatB_C_1"/>
</dbReference>
<dbReference type="InterPro" id="IPR023168">
    <property type="entry name" value="GatB_Yqey_C_2"/>
</dbReference>
<dbReference type="InterPro" id="IPR017958">
    <property type="entry name" value="Gln-tRNA_amidoTrfase_suB_CS"/>
</dbReference>
<dbReference type="InterPro" id="IPR014746">
    <property type="entry name" value="Gln_synth/guanido_kin_cat_dom"/>
</dbReference>
<dbReference type="NCBIfam" id="TIGR00133">
    <property type="entry name" value="gatB"/>
    <property type="match status" value="1"/>
</dbReference>
<dbReference type="NCBIfam" id="NF004012">
    <property type="entry name" value="PRK05477.1-2"/>
    <property type="match status" value="1"/>
</dbReference>
<dbReference type="NCBIfam" id="NF004014">
    <property type="entry name" value="PRK05477.1-4"/>
    <property type="match status" value="1"/>
</dbReference>
<dbReference type="PANTHER" id="PTHR11659">
    <property type="entry name" value="GLUTAMYL-TRNA GLN AMIDOTRANSFERASE SUBUNIT B MITOCHONDRIAL AND PROKARYOTIC PET112-RELATED"/>
    <property type="match status" value="1"/>
</dbReference>
<dbReference type="PANTHER" id="PTHR11659:SF0">
    <property type="entry name" value="GLUTAMYL-TRNA(GLN) AMIDOTRANSFERASE SUBUNIT B, MITOCHONDRIAL"/>
    <property type="match status" value="1"/>
</dbReference>
<dbReference type="Pfam" id="PF02934">
    <property type="entry name" value="GatB_N"/>
    <property type="match status" value="1"/>
</dbReference>
<dbReference type="Pfam" id="PF02637">
    <property type="entry name" value="GatB_Yqey"/>
    <property type="match status" value="1"/>
</dbReference>
<dbReference type="SMART" id="SM00845">
    <property type="entry name" value="GatB_Yqey"/>
    <property type="match status" value="1"/>
</dbReference>
<dbReference type="SUPFAM" id="SSF89095">
    <property type="entry name" value="GatB/YqeY motif"/>
    <property type="match status" value="1"/>
</dbReference>
<dbReference type="SUPFAM" id="SSF55931">
    <property type="entry name" value="Glutamine synthetase/guanido kinase"/>
    <property type="match status" value="1"/>
</dbReference>
<dbReference type="PROSITE" id="PS01234">
    <property type="entry name" value="GATB"/>
    <property type="match status" value="1"/>
</dbReference>
<comment type="function">
    <text evidence="1">Allows the formation of correctly charged Asn-tRNA(Asn) or Gln-tRNA(Gln) through the transamidation of misacylated Asp-tRNA(Asn) or Glu-tRNA(Gln) in organisms which lack either or both of asparaginyl-tRNA or glutaminyl-tRNA synthetases. The reaction takes place in the presence of glutamine and ATP through an activated phospho-Asp-tRNA(Asn) or phospho-Glu-tRNA(Gln).</text>
</comment>
<comment type="catalytic activity">
    <reaction evidence="1">
        <text>L-glutamyl-tRNA(Gln) + L-glutamine + ATP + H2O = L-glutaminyl-tRNA(Gln) + L-glutamate + ADP + phosphate + H(+)</text>
        <dbReference type="Rhea" id="RHEA:17521"/>
        <dbReference type="Rhea" id="RHEA-COMP:9681"/>
        <dbReference type="Rhea" id="RHEA-COMP:9684"/>
        <dbReference type="ChEBI" id="CHEBI:15377"/>
        <dbReference type="ChEBI" id="CHEBI:15378"/>
        <dbReference type="ChEBI" id="CHEBI:29985"/>
        <dbReference type="ChEBI" id="CHEBI:30616"/>
        <dbReference type="ChEBI" id="CHEBI:43474"/>
        <dbReference type="ChEBI" id="CHEBI:58359"/>
        <dbReference type="ChEBI" id="CHEBI:78520"/>
        <dbReference type="ChEBI" id="CHEBI:78521"/>
        <dbReference type="ChEBI" id="CHEBI:456216"/>
    </reaction>
</comment>
<comment type="catalytic activity">
    <reaction evidence="1">
        <text>L-aspartyl-tRNA(Asn) + L-glutamine + ATP + H2O = L-asparaginyl-tRNA(Asn) + L-glutamate + ADP + phosphate + 2 H(+)</text>
        <dbReference type="Rhea" id="RHEA:14513"/>
        <dbReference type="Rhea" id="RHEA-COMP:9674"/>
        <dbReference type="Rhea" id="RHEA-COMP:9677"/>
        <dbReference type="ChEBI" id="CHEBI:15377"/>
        <dbReference type="ChEBI" id="CHEBI:15378"/>
        <dbReference type="ChEBI" id="CHEBI:29985"/>
        <dbReference type="ChEBI" id="CHEBI:30616"/>
        <dbReference type="ChEBI" id="CHEBI:43474"/>
        <dbReference type="ChEBI" id="CHEBI:58359"/>
        <dbReference type="ChEBI" id="CHEBI:78515"/>
        <dbReference type="ChEBI" id="CHEBI:78516"/>
        <dbReference type="ChEBI" id="CHEBI:456216"/>
    </reaction>
</comment>
<comment type="subunit">
    <text evidence="1">Heterotrimer of A, B and C subunits.</text>
</comment>
<comment type="similarity">
    <text evidence="1">Belongs to the GatB/GatE family. GatB subfamily.</text>
</comment>
<accession>A1U487</accession>
<gene>
    <name evidence="1" type="primary">gatB</name>
    <name type="ordered locus">Maqu_2731</name>
</gene>
<protein>
    <recommendedName>
        <fullName evidence="1">Aspartyl/glutamyl-tRNA(Asn/Gln) amidotransferase subunit B</fullName>
        <shortName evidence="1">Asp/Glu-ADT subunit B</shortName>
        <ecNumber evidence="1">6.3.5.-</ecNumber>
    </recommendedName>
</protein>
<evidence type="ECO:0000255" key="1">
    <source>
        <dbReference type="HAMAP-Rule" id="MF_00121"/>
    </source>
</evidence>
<name>GATB_MARN8</name>
<keyword id="KW-0067">ATP-binding</keyword>
<keyword id="KW-0436">Ligase</keyword>
<keyword id="KW-0547">Nucleotide-binding</keyword>
<keyword id="KW-0648">Protein biosynthesis</keyword>
<feature type="chain" id="PRO_1000015989" description="Aspartyl/glutamyl-tRNA(Asn/Gln) amidotransferase subunit B">
    <location>
        <begin position="1"/>
        <end position="483"/>
    </location>
</feature>
<organism>
    <name type="scientific">Marinobacter nauticus (strain ATCC 700491 / DSM 11845 / VT8)</name>
    <name type="common">Marinobacter aquaeolei</name>
    <dbReference type="NCBI Taxonomy" id="351348"/>
    <lineage>
        <taxon>Bacteria</taxon>
        <taxon>Pseudomonadati</taxon>
        <taxon>Pseudomonadota</taxon>
        <taxon>Gammaproteobacteria</taxon>
        <taxon>Pseudomonadales</taxon>
        <taxon>Marinobacteraceae</taxon>
        <taxon>Marinobacter</taxon>
    </lineage>
</organism>
<reference key="1">
    <citation type="journal article" date="2011" name="Appl. Environ. Microbiol.">
        <title>Genomic potential of Marinobacter aquaeolei, a biogeochemical 'opportunitroph'.</title>
        <authorList>
            <person name="Singer E."/>
            <person name="Webb E.A."/>
            <person name="Nelson W.C."/>
            <person name="Heidelberg J.F."/>
            <person name="Ivanova N."/>
            <person name="Pati A."/>
            <person name="Edwards K.J."/>
        </authorList>
    </citation>
    <scope>NUCLEOTIDE SEQUENCE [LARGE SCALE GENOMIC DNA]</scope>
    <source>
        <strain>ATCC 700491 / DSM 11845 / VT8</strain>
    </source>
</reference>
<sequence>MQWDIVIGLEIHVQLATQTKIFSGSSTAYGAEPNTQANAVDLAMPGTLPVPNEQAFRYAVMFGLATNAEIGRRSVFERKNYFYPDLPKGYQTTQLAQPIVGPGYVDIDLADGSTKRVRIHHAHLEEDAGKSLHEDYHGMTGIDLNRAGTPLIEVVTEPDMTSAEEAVAFAKKLHSIVTSLGICDGDMSQGSMRFDVNISLKPKGSDTLGTRTETKNLNSFRFMEQAIAHEVERQMDILEDGGVIVQETRLYNGDRDESRSMRTKEEANDYRYFPCPDLLPVEIDDAFIEDARSRLPELPDARRARFKEQYGLNDYDAGILSADAKLAAFFEETVEHGKDAKLAANWIQGEFSARLNAEEKSVAEAPITGAQLGAMVTRIADNTLSSAGAKKVFEALWTGENNDVDAIIEAKGLKQVSDTGALESMVDEVLAGMPDQVAQYQNEEDPKKRKKMLGGFMGPLMKASKGQGNPKLFNEILVRKLGG</sequence>
<proteinExistence type="inferred from homology"/>